<gene>
    <name type="ordered locus">Sala_1915</name>
</gene>
<protein>
    <recommendedName>
        <fullName evidence="1">dTTP/UTP pyrophosphatase</fullName>
        <shortName evidence="1">dTTPase/UTPase</shortName>
        <ecNumber evidence="1">3.6.1.9</ecNumber>
    </recommendedName>
    <alternativeName>
        <fullName evidence="1">Nucleoside triphosphate pyrophosphatase</fullName>
    </alternativeName>
    <alternativeName>
        <fullName evidence="1">Nucleotide pyrophosphatase</fullName>
        <shortName evidence="1">Nucleotide PPase</shortName>
    </alternativeName>
</protein>
<comment type="function">
    <text evidence="1">Nucleoside triphosphate pyrophosphatase that hydrolyzes dTTP and UTP. May have a dual role in cell division arrest and in preventing the incorporation of modified nucleotides into cellular nucleic acids.</text>
</comment>
<comment type="catalytic activity">
    <reaction evidence="1">
        <text>dTTP + H2O = dTMP + diphosphate + H(+)</text>
        <dbReference type="Rhea" id="RHEA:28534"/>
        <dbReference type="ChEBI" id="CHEBI:15377"/>
        <dbReference type="ChEBI" id="CHEBI:15378"/>
        <dbReference type="ChEBI" id="CHEBI:33019"/>
        <dbReference type="ChEBI" id="CHEBI:37568"/>
        <dbReference type="ChEBI" id="CHEBI:63528"/>
        <dbReference type="EC" id="3.6.1.9"/>
    </reaction>
</comment>
<comment type="catalytic activity">
    <reaction evidence="1">
        <text>UTP + H2O = UMP + diphosphate + H(+)</text>
        <dbReference type="Rhea" id="RHEA:29395"/>
        <dbReference type="ChEBI" id="CHEBI:15377"/>
        <dbReference type="ChEBI" id="CHEBI:15378"/>
        <dbReference type="ChEBI" id="CHEBI:33019"/>
        <dbReference type="ChEBI" id="CHEBI:46398"/>
        <dbReference type="ChEBI" id="CHEBI:57865"/>
        <dbReference type="EC" id="3.6.1.9"/>
    </reaction>
</comment>
<comment type="cofactor">
    <cofactor evidence="1">
        <name>a divalent metal cation</name>
        <dbReference type="ChEBI" id="CHEBI:60240"/>
    </cofactor>
</comment>
<comment type="subcellular location">
    <subcellularLocation>
        <location evidence="1">Cytoplasm</location>
    </subcellularLocation>
</comment>
<comment type="similarity">
    <text evidence="1">Belongs to the Maf family. YhdE subfamily.</text>
</comment>
<organism>
    <name type="scientific">Sphingopyxis alaskensis (strain DSM 13593 / LMG 18877 / RB2256)</name>
    <name type="common">Sphingomonas alaskensis</name>
    <dbReference type="NCBI Taxonomy" id="317655"/>
    <lineage>
        <taxon>Bacteria</taxon>
        <taxon>Pseudomonadati</taxon>
        <taxon>Pseudomonadota</taxon>
        <taxon>Alphaproteobacteria</taxon>
        <taxon>Sphingomonadales</taxon>
        <taxon>Sphingomonadaceae</taxon>
        <taxon>Sphingopyxis</taxon>
    </lineage>
</organism>
<keyword id="KW-0963">Cytoplasm</keyword>
<keyword id="KW-0378">Hydrolase</keyword>
<keyword id="KW-0546">Nucleotide metabolism</keyword>
<keyword id="KW-1185">Reference proteome</keyword>
<sequence length="190" mass="20086">MPALVLASTSPRRRELLARIGVMPARIAAPEIDETPLKGELPRDYVVRLARGKALAVARAPDEVVLAGDTTVSVGRRILEKPADEPDLRRMLGLLSGRRHHVWSGVCVVGTDGKARVRAVDTIVAFKALSAAEIDAYVASGEGMGKAGGYAIQGRAEAFVRFLSGSHSNVVGLPLFETRALLSSVGIPLG</sequence>
<feature type="chain" id="PRO_0000267441" description="dTTP/UTP pyrophosphatase">
    <location>
        <begin position="1"/>
        <end position="190"/>
    </location>
</feature>
<feature type="active site" description="Proton acceptor" evidence="1">
    <location>
        <position position="69"/>
    </location>
</feature>
<feature type="site" description="Important for substrate specificity" evidence="1">
    <location>
        <position position="12"/>
    </location>
</feature>
<feature type="site" description="Important for substrate specificity" evidence="1">
    <location>
        <position position="70"/>
    </location>
</feature>
<feature type="site" description="Important for substrate specificity" evidence="1">
    <location>
        <position position="153"/>
    </location>
</feature>
<accession>Q1GRU5</accession>
<dbReference type="EC" id="3.6.1.9" evidence="1"/>
<dbReference type="EMBL" id="CP000356">
    <property type="protein sequence ID" value="ABF53627.1"/>
    <property type="molecule type" value="Genomic_DNA"/>
</dbReference>
<dbReference type="RefSeq" id="WP_011542204.1">
    <property type="nucleotide sequence ID" value="NC_008048.1"/>
</dbReference>
<dbReference type="SMR" id="Q1GRU5"/>
<dbReference type="STRING" id="317655.Sala_1915"/>
<dbReference type="KEGG" id="sal:Sala_1915"/>
<dbReference type="eggNOG" id="COG0424">
    <property type="taxonomic scope" value="Bacteria"/>
</dbReference>
<dbReference type="HOGENOM" id="CLU_040416_2_0_5"/>
<dbReference type="OrthoDB" id="9807767at2"/>
<dbReference type="Proteomes" id="UP000006578">
    <property type="component" value="Chromosome"/>
</dbReference>
<dbReference type="GO" id="GO:0005737">
    <property type="term" value="C:cytoplasm"/>
    <property type="evidence" value="ECO:0007669"/>
    <property type="project" value="UniProtKB-SubCell"/>
</dbReference>
<dbReference type="GO" id="GO:0036218">
    <property type="term" value="F:dTTP diphosphatase activity"/>
    <property type="evidence" value="ECO:0007669"/>
    <property type="project" value="RHEA"/>
</dbReference>
<dbReference type="GO" id="GO:0036221">
    <property type="term" value="F:UTP diphosphatase activity"/>
    <property type="evidence" value="ECO:0007669"/>
    <property type="project" value="RHEA"/>
</dbReference>
<dbReference type="GO" id="GO:0009117">
    <property type="term" value="P:nucleotide metabolic process"/>
    <property type="evidence" value="ECO:0007669"/>
    <property type="project" value="UniProtKB-KW"/>
</dbReference>
<dbReference type="CDD" id="cd00555">
    <property type="entry name" value="Maf"/>
    <property type="match status" value="1"/>
</dbReference>
<dbReference type="Gene3D" id="3.90.950.10">
    <property type="match status" value="1"/>
</dbReference>
<dbReference type="HAMAP" id="MF_00528">
    <property type="entry name" value="Maf"/>
    <property type="match status" value="1"/>
</dbReference>
<dbReference type="InterPro" id="IPR029001">
    <property type="entry name" value="ITPase-like_fam"/>
</dbReference>
<dbReference type="InterPro" id="IPR003697">
    <property type="entry name" value="Maf-like"/>
</dbReference>
<dbReference type="NCBIfam" id="TIGR00172">
    <property type="entry name" value="maf"/>
    <property type="match status" value="1"/>
</dbReference>
<dbReference type="PANTHER" id="PTHR43213">
    <property type="entry name" value="BIFUNCTIONAL DTTP/UTP PYROPHOSPHATASE/METHYLTRANSFERASE PROTEIN-RELATED"/>
    <property type="match status" value="1"/>
</dbReference>
<dbReference type="PANTHER" id="PTHR43213:SF5">
    <property type="entry name" value="BIFUNCTIONAL DTTP_UTP PYROPHOSPHATASE_METHYLTRANSFERASE PROTEIN-RELATED"/>
    <property type="match status" value="1"/>
</dbReference>
<dbReference type="Pfam" id="PF02545">
    <property type="entry name" value="Maf"/>
    <property type="match status" value="1"/>
</dbReference>
<dbReference type="PIRSF" id="PIRSF006305">
    <property type="entry name" value="Maf"/>
    <property type="match status" value="1"/>
</dbReference>
<dbReference type="SUPFAM" id="SSF52972">
    <property type="entry name" value="ITPase-like"/>
    <property type="match status" value="1"/>
</dbReference>
<proteinExistence type="inferred from homology"/>
<name>NTPPA_SPHAL</name>
<evidence type="ECO:0000255" key="1">
    <source>
        <dbReference type="HAMAP-Rule" id="MF_00528"/>
    </source>
</evidence>
<reference key="1">
    <citation type="journal article" date="2009" name="Proc. Natl. Acad. Sci. U.S.A.">
        <title>The genomic basis of trophic strategy in marine bacteria.</title>
        <authorList>
            <person name="Lauro F.M."/>
            <person name="McDougald D."/>
            <person name="Thomas T."/>
            <person name="Williams T.J."/>
            <person name="Egan S."/>
            <person name="Rice S."/>
            <person name="DeMaere M.Z."/>
            <person name="Ting L."/>
            <person name="Ertan H."/>
            <person name="Johnson J."/>
            <person name="Ferriera S."/>
            <person name="Lapidus A."/>
            <person name="Anderson I."/>
            <person name="Kyrpides N."/>
            <person name="Munk A.C."/>
            <person name="Detter C."/>
            <person name="Han C.S."/>
            <person name="Brown M.V."/>
            <person name="Robb F.T."/>
            <person name="Kjelleberg S."/>
            <person name="Cavicchioli R."/>
        </authorList>
    </citation>
    <scope>NUCLEOTIDE SEQUENCE [LARGE SCALE GENOMIC DNA]</scope>
    <source>
        <strain>DSM 13593 / LMG 18877 / RB2256</strain>
    </source>
</reference>